<protein>
    <recommendedName>
        <fullName evidence="1">L-rhamnose-proton symporter</fullName>
    </recommendedName>
    <alternativeName>
        <fullName evidence="1">L-rhamnose-H(+) transport protein</fullName>
    </alternativeName>
</protein>
<feature type="chain" id="PRO_1000068694" description="L-rhamnose-proton symporter">
    <location>
        <begin position="1"/>
        <end position="344"/>
    </location>
</feature>
<feature type="transmembrane region" description="Helical" evidence="1">
    <location>
        <begin position="4"/>
        <end position="24"/>
    </location>
</feature>
<feature type="transmembrane region" description="Helical" evidence="1">
    <location>
        <begin position="38"/>
        <end position="58"/>
    </location>
</feature>
<feature type="transmembrane region" description="Helical" evidence="1">
    <location>
        <begin position="68"/>
        <end position="88"/>
    </location>
</feature>
<feature type="transmembrane region" description="Helical" evidence="1">
    <location>
        <begin position="101"/>
        <end position="121"/>
    </location>
</feature>
<feature type="transmembrane region" description="Helical" evidence="1">
    <location>
        <begin position="137"/>
        <end position="157"/>
    </location>
</feature>
<feature type="transmembrane region" description="Helical" evidence="1">
    <location>
        <begin position="175"/>
        <end position="195"/>
    </location>
</feature>
<feature type="transmembrane region" description="Helical" evidence="1">
    <location>
        <begin position="207"/>
        <end position="227"/>
    </location>
</feature>
<feature type="transmembrane region" description="Helical" evidence="1">
    <location>
        <begin position="259"/>
        <end position="279"/>
    </location>
</feature>
<feature type="transmembrane region" description="Helical" evidence="1">
    <location>
        <begin position="290"/>
        <end position="310"/>
    </location>
</feature>
<feature type="transmembrane region" description="Helical" evidence="1">
    <location>
        <begin position="321"/>
        <end position="341"/>
    </location>
</feature>
<organism>
    <name type="scientific">Yersinia pseudotuberculosis serotype O:1b (strain IP 31758)</name>
    <dbReference type="NCBI Taxonomy" id="349747"/>
    <lineage>
        <taxon>Bacteria</taxon>
        <taxon>Pseudomonadati</taxon>
        <taxon>Pseudomonadota</taxon>
        <taxon>Gammaproteobacteria</taxon>
        <taxon>Enterobacterales</taxon>
        <taxon>Yersiniaceae</taxon>
        <taxon>Yersinia</taxon>
    </lineage>
</organism>
<name>RHAT_YERP3</name>
<dbReference type="EMBL" id="CP000720">
    <property type="protein sequence ID" value="ABS46536.1"/>
    <property type="molecule type" value="Genomic_DNA"/>
</dbReference>
<dbReference type="RefSeq" id="WP_002209111.1">
    <property type="nucleotide sequence ID" value="NC_009708.1"/>
</dbReference>
<dbReference type="GeneID" id="57974271"/>
<dbReference type="KEGG" id="ypi:YpsIP31758_3752"/>
<dbReference type="HOGENOM" id="CLU_066437_0_0_6"/>
<dbReference type="Proteomes" id="UP000002412">
    <property type="component" value="Chromosome"/>
</dbReference>
<dbReference type="GO" id="GO:0005886">
    <property type="term" value="C:plasma membrane"/>
    <property type="evidence" value="ECO:0007669"/>
    <property type="project" value="UniProtKB-SubCell"/>
</dbReference>
<dbReference type="GO" id="GO:0015153">
    <property type="term" value="F:rhamnose transmembrane transporter activity"/>
    <property type="evidence" value="ECO:0007669"/>
    <property type="project" value="UniProtKB-UniRule"/>
</dbReference>
<dbReference type="GO" id="GO:0015293">
    <property type="term" value="F:symporter activity"/>
    <property type="evidence" value="ECO:0007669"/>
    <property type="project" value="UniProtKB-KW"/>
</dbReference>
<dbReference type="HAMAP" id="MF_01532">
    <property type="entry name" value="RhaT"/>
    <property type="match status" value="1"/>
</dbReference>
<dbReference type="InterPro" id="IPR004673">
    <property type="entry name" value="L-rhamnose-proton_sym_RhaT"/>
</dbReference>
<dbReference type="NCBIfam" id="NF010021">
    <property type="entry name" value="PRK13499.1-1"/>
    <property type="match status" value="1"/>
</dbReference>
<dbReference type="NCBIfam" id="NF010023">
    <property type="entry name" value="PRK13499.1-3"/>
    <property type="match status" value="1"/>
</dbReference>
<dbReference type="NCBIfam" id="TIGR00776">
    <property type="entry name" value="RhaT"/>
    <property type="match status" value="1"/>
</dbReference>
<dbReference type="Pfam" id="PF06379">
    <property type="entry name" value="RhaT"/>
    <property type="match status" value="1"/>
</dbReference>
<evidence type="ECO:0000255" key="1">
    <source>
        <dbReference type="HAMAP-Rule" id="MF_01532"/>
    </source>
</evidence>
<keyword id="KW-0997">Cell inner membrane</keyword>
<keyword id="KW-1003">Cell membrane</keyword>
<keyword id="KW-0472">Membrane</keyword>
<keyword id="KW-0762">Sugar transport</keyword>
<keyword id="KW-0769">Symport</keyword>
<keyword id="KW-0812">Transmembrane</keyword>
<keyword id="KW-1133">Transmembrane helix</keyword>
<keyword id="KW-0813">Transport</keyword>
<proteinExistence type="inferred from homology"/>
<sequence>MNNAIILGIIWHLVGAASAACFYAPFKQVKKWSWETMWSIGGLVSWLILPWTVSYLLLPDFWQYYGSFSIATLLPVFLFGAMWGIGNINYGLTMRYLGMSMGIGIAIGITLIIGTLMTPILQGRFDVLLGTPGGRMTLLGVFVALIGVAIVSYAGLLKERAMGIQAEEFNLKKGLILAVMCGIFSAGMSFAMDAAKPMHEAASALGINSLYVALPSYVIIMGGGAIINLSYCFIRLATLKNLSVKADFSVAKPLLITNILFSALAGLMWYLQFFFYAWGHAKIPQQYDYMSWMLHMSFYVLCGGIVGLLLKEWKCSTKKPVAVLCIGCLVIILAANIVGLGMAA</sequence>
<reference key="1">
    <citation type="journal article" date="2007" name="PLoS Genet.">
        <title>The complete genome sequence of Yersinia pseudotuberculosis IP31758, the causative agent of Far East scarlet-like fever.</title>
        <authorList>
            <person name="Eppinger M."/>
            <person name="Rosovitz M.J."/>
            <person name="Fricke W.F."/>
            <person name="Rasko D.A."/>
            <person name="Kokorina G."/>
            <person name="Fayolle C."/>
            <person name="Lindler L.E."/>
            <person name="Carniel E."/>
            <person name="Ravel J."/>
        </authorList>
    </citation>
    <scope>NUCLEOTIDE SEQUENCE [LARGE SCALE GENOMIC DNA]</scope>
    <source>
        <strain>IP 31758</strain>
    </source>
</reference>
<comment type="function">
    <text evidence="1">Uptake of L-rhamnose across the cytoplasmic membrane with the concomitant transport of protons into the cell (symport system).</text>
</comment>
<comment type="catalytic activity">
    <reaction evidence="1">
        <text>L-rhamnopyranose(in) + H(+)(in) = L-rhamnopyranose(out) + H(+)(out)</text>
        <dbReference type="Rhea" id="RHEA:29947"/>
        <dbReference type="ChEBI" id="CHEBI:15378"/>
        <dbReference type="ChEBI" id="CHEBI:62346"/>
    </reaction>
    <physiologicalReaction direction="right-to-left" evidence="1">
        <dbReference type="Rhea" id="RHEA:29949"/>
    </physiologicalReaction>
</comment>
<comment type="subcellular location">
    <subcellularLocation>
        <location evidence="1">Cell inner membrane</location>
        <topology evidence="1">Multi-pass membrane protein</topology>
    </subcellularLocation>
</comment>
<comment type="similarity">
    <text evidence="1">Belongs to the L-rhamnose transporter (TC 2.A.7.6) family.</text>
</comment>
<accession>A7FN78</accession>
<gene>
    <name evidence="1" type="primary">rhaT</name>
    <name type="ordered locus">YpsIP31758_3752</name>
</gene>